<evidence type="ECO:0000255" key="1">
    <source>
        <dbReference type="HAMAP-Rule" id="MF_01820"/>
    </source>
</evidence>
<evidence type="ECO:0000255" key="2">
    <source>
        <dbReference type="PROSITE-ProRule" id="PRU01058"/>
    </source>
</evidence>
<evidence type="ECO:0000256" key="3">
    <source>
        <dbReference type="SAM" id="MobiDB-lite"/>
    </source>
</evidence>
<feature type="chain" id="PRO_1000216033" description="Small ribosomal subunit biogenesis GTPase RsgA">
    <location>
        <begin position="1"/>
        <end position="314"/>
    </location>
</feature>
<feature type="domain" description="CP-type G" evidence="2">
    <location>
        <begin position="85"/>
        <end position="246"/>
    </location>
</feature>
<feature type="region of interest" description="Disordered" evidence="3">
    <location>
        <begin position="1"/>
        <end position="21"/>
    </location>
</feature>
<feature type="binding site" evidence="1">
    <location>
        <begin position="134"/>
        <end position="137"/>
    </location>
    <ligand>
        <name>GTP</name>
        <dbReference type="ChEBI" id="CHEBI:37565"/>
    </ligand>
</feature>
<feature type="binding site" evidence="1">
    <location>
        <begin position="188"/>
        <end position="196"/>
    </location>
    <ligand>
        <name>GTP</name>
        <dbReference type="ChEBI" id="CHEBI:37565"/>
    </ligand>
</feature>
<feature type="binding site" evidence="1">
    <location>
        <position position="270"/>
    </location>
    <ligand>
        <name>Zn(2+)</name>
        <dbReference type="ChEBI" id="CHEBI:29105"/>
    </ligand>
</feature>
<feature type="binding site" evidence="1">
    <location>
        <position position="275"/>
    </location>
    <ligand>
        <name>Zn(2+)</name>
        <dbReference type="ChEBI" id="CHEBI:29105"/>
    </ligand>
</feature>
<feature type="binding site" evidence="1">
    <location>
        <position position="277"/>
    </location>
    <ligand>
        <name>Zn(2+)</name>
        <dbReference type="ChEBI" id="CHEBI:29105"/>
    </ligand>
</feature>
<feature type="binding site" evidence="1">
    <location>
        <position position="283"/>
    </location>
    <ligand>
        <name>Zn(2+)</name>
        <dbReference type="ChEBI" id="CHEBI:29105"/>
    </ligand>
</feature>
<comment type="function">
    <text evidence="1">One of several proteins that assist in the late maturation steps of the functional core of the 30S ribosomal subunit. Helps release RbfA from mature subunits. May play a role in the assembly of ribosomal proteins into the subunit. Circularly permuted GTPase that catalyzes slow GTP hydrolysis, GTPase activity is stimulated by the 30S ribosomal subunit.</text>
</comment>
<comment type="cofactor">
    <cofactor evidence="1">
        <name>Zn(2+)</name>
        <dbReference type="ChEBI" id="CHEBI:29105"/>
    </cofactor>
    <text evidence="1">Binds 1 zinc ion per subunit.</text>
</comment>
<comment type="subunit">
    <text evidence="1">Monomer. Associates with 30S ribosomal subunit, binds 16S rRNA.</text>
</comment>
<comment type="subcellular location">
    <subcellularLocation>
        <location evidence="1">Cytoplasm</location>
    </subcellularLocation>
</comment>
<comment type="similarity">
    <text evidence="1">Belongs to the TRAFAC class YlqF/YawG GTPase family. RsgA subfamily.</text>
</comment>
<sequence>MKRAPTKQPAKPAARGGERAQGRVIAAHGRHYIVAPADGGPMLQCFPRGKKSEVAVGDRVAYERTSADQGVIVEIGERRNLLYRSDQFKSKLFAANLDQLLIVLATEPYFSEDLLGRALIAAEANELKPIVVLNKIDVEAALPVARERLAPYRALGYDVLELSVKGAPDDARAQLAPRLAGHSTILLGQSGMGKSTLVNLLVPDAEAATREISAALNSGRHTTTFTRLYPLQDGGALIDSPGFQEFGLYHLTEGRLERAFPEFRPLLAHCRFYNCHHLHEPGCAILEALADGRIAPTRHALYAQLVHEASQIVR</sequence>
<accession>A3NBZ8</accession>
<gene>
    <name evidence="1" type="primary">rsgA</name>
    <name type="ordered locus">BURPS668_2850</name>
</gene>
<proteinExistence type="inferred from homology"/>
<organism>
    <name type="scientific">Burkholderia pseudomallei (strain 668)</name>
    <dbReference type="NCBI Taxonomy" id="320373"/>
    <lineage>
        <taxon>Bacteria</taxon>
        <taxon>Pseudomonadati</taxon>
        <taxon>Pseudomonadota</taxon>
        <taxon>Betaproteobacteria</taxon>
        <taxon>Burkholderiales</taxon>
        <taxon>Burkholderiaceae</taxon>
        <taxon>Burkholderia</taxon>
        <taxon>pseudomallei group</taxon>
    </lineage>
</organism>
<reference key="1">
    <citation type="journal article" date="2010" name="Genome Biol. Evol.">
        <title>Continuing evolution of Burkholderia mallei through genome reduction and large-scale rearrangements.</title>
        <authorList>
            <person name="Losada L."/>
            <person name="Ronning C.M."/>
            <person name="DeShazer D."/>
            <person name="Woods D."/>
            <person name="Fedorova N."/>
            <person name="Kim H.S."/>
            <person name="Shabalina S.A."/>
            <person name="Pearson T.R."/>
            <person name="Brinkac L."/>
            <person name="Tan P."/>
            <person name="Nandi T."/>
            <person name="Crabtree J."/>
            <person name="Badger J."/>
            <person name="Beckstrom-Sternberg S."/>
            <person name="Saqib M."/>
            <person name="Schutzer S.E."/>
            <person name="Keim P."/>
            <person name="Nierman W.C."/>
        </authorList>
    </citation>
    <scope>NUCLEOTIDE SEQUENCE [LARGE SCALE GENOMIC DNA]</scope>
    <source>
        <strain>668</strain>
    </source>
</reference>
<keyword id="KW-0963">Cytoplasm</keyword>
<keyword id="KW-0342">GTP-binding</keyword>
<keyword id="KW-0378">Hydrolase</keyword>
<keyword id="KW-0479">Metal-binding</keyword>
<keyword id="KW-0547">Nucleotide-binding</keyword>
<keyword id="KW-0690">Ribosome biogenesis</keyword>
<keyword id="KW-0694">RNA-binding</keyword>
<keyword id="KW-0699">rRNA-binding</keyword>
<keyword id="KW-0862">Zinc</keyword>
<name>RSGA_BURP6</name>
<protein>
    <recommendedName>
        <fullName evidence="1">Small ribosomal subunit biogenesis GTPase RsgA</fullName>
        <ecNumber evidence="1">3.6.1.-</ecNumber>
    </recommendedName>
</protein>
<dbReference type="EC" id="3.6.1.-" evidence="1"/>
<dbReference type="EMBL" id="CP000570">
    <property type="protein sequence ID" value="ABN83044.1"/>
    <property type="molecule type" value="Genomic_DNA"/>
</dbReference>
<dbReference type="RefSeq" id="WP_004535470.1">
    <property type="nucleotide sequence ID" value="NC_009074.1"/>
</dbReference>
<dbReference type="SMR" id="A3NBZ8"/>
<dbReference type="KEGG" id="bpd:BURPS668_2850"/>
<dbReference type="HOGENOM" id="CLU_033617_2_0_4"/>
<dbReference type="GO" id="GO:0005737">
    <property type="term" value="C:cytoplasm"/>
    <property type="evidence" value="ECO:0007669"/>
    <property type="project" value="UniProtKB-SubCell"/>
</dbReference>
<dbReference type="GO" id="GO:0005525">
    <property type="term" value="F:GTP binding"/>
    <property type="evidence" value="ECO:0007669"/>
    <property type="project" value="UniProtKB-UniRule"/>
</dbReference>
<dbReference type="GO" id="GO:0003924">
    <property type="term" value="F:GTPase activity"/>
    <property type="evidence" value="ECO:0007669"/>
    <property type="project" value="UniProtKB-UniRule"/>
</dbReference>
<dbReference type="GO" id="GO:0046872">
    <property type="term" value="F:metal ion binding"/>
    <property type="evidence" value="ECO:0007669"/>
    <property type="project" value="UniProtKB-KW"/>
</dbReference>
<dbReference type="GO" id="GO:0019843">
    <property type="term" value="F:rRNA binding"/>
    <property type="evidence" value="ECO:0007669"/>
    <property type="project" value="UniProtKB-KW"/>
</dbReference>
<dbReference type="GO" id="GO:0042274">
    <property type="term" value="P:ribosomal small subunit biogenesis"/>
    <property type="evidence" value="ECO:0007669"/>
    <property type="project" value="UniProtKB-UniRule"/>
</dbReference>
<dbReference type="CDD" id="cd04466">
    <property type="entry name" value="S1_YloQ_GTPase"/>
    <property type="match status" value="1"/>
</dbReference>
<dbReference type="CDD" id="cd01854">
    <property type="entry name" value="YjeQ_EngC"/>
    <property type="match status" value="1"/>
</dbReference>
<dbReference type="Gene3D" id="2.40.50.140">
    <property type="entry name" value="Nucleic acid-binding proteins"/>
    <property type="match status" value="1"/>
</dbReference>
<dbReference type="Gene3D" id="3.40.50.300">
    <property type="entry name" value="P-loop containing nucleotide triphosphate hydrolases"/>
    <property type="match status" value="1"/>
</dbReference>
<dbReference type="Gene3D" id="1.10.40.50">
    <property type="entry name" value="Probable gtpase engc, domain 3"/>
    <property type="match status" value="1"/>
</dbReference>
<dbReference type="HAMAP" id="MF_01820">
    <property type="entry name" value="GTPase_RsgA"/>
    <property type="match status" value="1"/>
</dbReference>
<dbReference type="InterPro" id="IPR030378">
    <property type="entry name" value="G_CP_dom"/>
</dbReference>
<dbReference type="InterPro" id="IPR012340">
    <property type="entry name" value="NA-bd_OB-fold"/>
</dbReference>
<dbReference type="InterPro" id="IPR027417">
    <property type="entry name" value="P-loop_NTPase"/>
</dbReference>
<dbReference type="InterPro" id="IPR004881">
    <property type="entry name" value="Ribosome_biogen_GTPase_RsgA"/>
</dbReference>
<dbReference type="InterPro" id="IPR010914">
    <property type="entry name" value="RsgA_GTPase_dom"/>
</dbReference>
<dbReference type="InterPro" id="IPR031944">
    <property type="entry name" value="RsgA_N"/>
</dbReference>
<dbReference type="NCBIfam" id="TIGR00157">
    <property type="entry name" value="ribosome small subunit-dependent GTPase A"/>
    <property type="match status" value="1"/>
</dbReference>
<dbReference type="PANTHER" id="PTHR32120">
    <property type="entry name" value="SMALL RIBOSOMAL SUBUNIT BIOGENESIS GTPASE RSGA"/>
    <property type="match status" value="1"/>
</dbReference>
<dbReference type="PANTHER" id="PTHR32120:SF11">
    <property type="entry name" value="SMALL RIBOSOMAL SUBUNIT BIOGENESIS GTPASE RSGA 1, MITOCHONDRIAL-RELATED"/>
    <property type="match status" value="1"/>
</dbReference>
<dbReference type="Pfam" id="PF03193">
    <property type="entry name" value="RsgA_GTPase"/>
    <property type="match status" value="1"/>
</dbReference>
<dbReference type="SUPFAM" id="SSF50249">
    <property type="entry name" value="Nucleic acid-binding proteins"/>
    <property type="match status" value="1"/>
</dbReference>
<dbReference type="SUPFAM" id="SSF52540">
    <property type="entry name" value="P-loop containing nucleoside triphosphate hydrolases"/>
    <property type="match status" value="1"/>
</dbReference>
<dbReference type="PROSITE" id="PS50936">
    <property type="entry name" value="ENGC_GTPASE"/>
    <property type="match status" value="1"/>
</dbReference>
<dbReference type="PROSITE" id="PS51721">
    <property type="entry name" value="G_CP"/>
    <property type="match status" value="1"/>
</dbReference>